<gene>
    <name evidence="1" type="primary">nuoI</name>
    <name type="ordered locus">YpsIP31758_1461</name>
</gene>
<feature type="chain" id="PRO_1000166642" description="NADH-quinone oxidoreductase subunit I">
    <location>
        <begin position="1"/>
        <end position="180"/>
    </location>
</feature>
<feature type="domain" description="4Fe-4S ferredoxin-type 1" evidence="1">
    <location>
        <begin position="50"/>
        <end position="80"/>
    </location>
</feature>
<feature type="domain" description="4Fe-4S ferredoxin-type 2" evidence="1">
    <location>
        <begin position="90"/>
        <end position="119"/>
    </location>
</feature>
<feature type="binding site" evidence="1">
    <location>
        <position position="60"/>
    </location>
    <ligand>
        <name>[4Fe-4S] cluster</name>
        <dbReference type="ChEBI" id="CHEBI:49883"/>
        <label>1</label>
    </ligand>
</feature>
<feature type="binding site" evidence="1">
    <location>
        <position position="63"/>
    </location>
    <ligand>
        <name>[4Fe-4S] cluster</name>
        <dbReference type="ChEBI" id="CHEBI:49883"/>
        <label>1</label>
    </ligand>
</feature>
<feature type="binding site" evidence="1">
    <location>
        <position position="66"/>
    </location>
    <ligand>
        <name>[4Fe-4S] cluster</name>
        <dbReference type="ChEBI" id="CHEBI:49883"/>
        <label>1</label>
    </ligand>
</feature>
<feature type="binding site" evidence="1">
    <location>
        <position position="70"/>
    </location>
    <ligand>
        <name>[4Fe-4S] cluster</name>
        <dbReference type="ChEBI" id="CHEBI:49883"/>
        <label>2</label>
    </ligand>
</feature>
<feature type="binding site" evidence="1">
    <location>
        <position position="99"/>
    </location>
    <ligand>
        <name>[4Fe-4S] cluster</name>
        <dbReference type="ChEBI" id="CHEBI:49883"/>
        <label>2</label>
    </ligand>
</feature>
<feature type="binding site" evidence="1">
    <location>
        <position position="102"/>
    </location>
    <ligand>
        <name>[4Fe-4S] cluster</name>
        <dbReference type="ChEBI" id="CHEBI:49883"/>
        <label>2</label>
    </ligand>
</feature>
<feature type="binding site" evidence="1">
    <location>
        <position position="105"/>
    </location>
    <ligand>
        <name>[4Fe-4S] cluster</name>
        <dbReference type="ChEBI" id="CHEBI:49883"/>
        <label>2</label>
    </ligand>
</feature>
<feature type="binding site" evidence="1">
    <location>
        <position position="109"/>
    </location>
    <ligand>
        <name>[4Fe-4S] cluster</name>
        <dbReference type="ChEBI" id="CHEBI:49883"/>
        <label>1</label>
    </ligand>
</feature>
<name>NUOI_YERP3</name>
<reference key="1">
    <citation type="journal article" date="2007" name="PLoS Genet.">
        <title>The complete genome sequence of Yersinia pseudotuberculosis IP31758, the causative agent of Far East scarlet-like fever.</title>
        <authorList>
            <person name="Eppinger M."/>
            <person name="Rosovitz M.J."/>
            <person name="Fricke W.F."/>
            <person name="Rasko D.A."/>
            <person name="Kokorina G."/>
            <person name="Fayolle C."/>
            <person name="Lindler L.E."/>
            <person name="Carniel E."/>
            <person name="Ravel J."/>
        </authorList>
    </citation>
    <scope>NUCLEOTIDE SEQUENCE [LARGE SCALE GENOMIC DNA]</scope>
    <source>
        <strain>IP 31758</strain>
    </source>
</reference>
<accession>A7FGR1</accession>
<proteinExistence type="inferred from homology"/>
<dbReference type="EC" id="7.1.1.-" evidence="1"/>
<dbReference type="EMBL" id="CP000720">
    <property type="protein sequence ID" value="ABS49558.1"/>
    <property type="molecule type" value="Genomic_DNA"/>
</dbReference>
<dbReference type="RefSeq" id="WP_002210273.1">
    <property type="nucleotide sequence ID" value="NC_009708.1"/>
</dbReference>
<dbReference type="SMR" id="A7FGR1"/>
<dbReference type="GeneID" id="96666079"/>
<dbReference type="KEGG" id="ypi:YpsIP31758_1461"/>
<dbReference type="HOGENOM" id="CLU_067218_4_3_6"/>
<dbReference type="Proteomes" id="UP000002412">
    <property type="component" value="Chromosome"/>
</dbReference>
<dbReference type="GO" id="GO:0005886">
    <property type="term" value="C:plasma membrane"/>
    <property type="evidence" value="ECO:0007669"/>
    <property type="project" value="UniProtKB-SubCell"/>
</dbReference>
<dbReference type="GO" id="GO:0051539">
    <property type="term" value="F:4 iron, 4 sulfur cluster binding"/>
    <property type="evidence" value="ECO:0007669"/>
    <property type="project" value="UniProtKB-KW"/>
</dbReference>
<dbReference type="GO" id="GO:0005506">
    <property type="term" value="F:iron ion binding"/>
    <property type="evidence" value="ECO:0007669"/>
    <property type="project" value="UniProtKB-UniRule"/>
</dbReference>
<dbReference type="GO" id="GO:0050136">
    <property type="term" value="F:NADH:ubiquinone reductase (non-electrogenic) activity"/>
    <property type="evidence" value="ECO:0007669"/>
    <property type="project" value="UniProtKB-UniRule"/>
</dbReference>
<dbReference type="GO" id="GO:0048038">
    <property type="term" value="F:quinone binding"/>
    <property type="evidence" value="ECO:0007669"/>
    <property type="project" value="UniProtKB-KW"/>
</dbReference>
<dbReference type="GO" id="GO:0009060">
    <property type="term" value="P:aerobic respiration"/>
    <property type="evidence" value="ECO:0007669"/>
    <property type="project" value="TreeGrafter"/>
</dbReference>
<dbReference type="FunFam" id="3.30.70.3270:FF:000002">
    <property type="entry name" value="NADH-quinone oxidoreductase subunit I"/>
    <property type="match status" value="1"/>
</dbReference>
<dbReference type="Gene3D" id="3.30.70.3270">
    <property type="match status" value="1"/>
</dbReference>
<dbReference type="HAMAP" id="MF_01351">
    <property type="entry name" value="NDH1_NuoI"/>
    <property type="match status" value="1"/>
</dbReference>
<dbReference type="InterPro" id="IPR017896">
    <property type="entry name" value="4Fe4S_Fe-S-bd"/>
</dbReference>
<dbReference type="InterPro" id="IPR017900">
    <property type="entry name" value="4Fe4S_Fe_S_CS"/>
</dbReference>
<dbReference type="InterPro" id="IPR010226">
    <property type="entry name" value="NADH_quinone_OxRdtase_chainI"/>
</dbReference>
<dbReference type="NCBIfam" id="TIGR01971">
    <property type="entry name" value="NuoI"/>
    <property type="match status" value="1"/>
</dbReference>
<dbReference type="NCBIfam" id="NF004536">
    <property type="entry name" value="PRK05888.1-1"/>
    <property type="match status" value="1"/>
</dbReference>
<dbReference type="PANTHER" id="PTHR10849:SF20">
    <property type="entry name" value="NADH DEHYDROGENASE [UBIQUINONE] IRON-SULFUR PROTEIN 8, MITOCHONDRIAL"/>
    <property type="match status" value="1"/>
</dbReference>
<dbReference type="PANTHER" id="PTHR10849">
    <property type="entry name" value="NADH DEHYDROGENASE UBIQUINONE IRON-SULFUR PROTEIN 8, MITOCHONDRIAL"/>
    <property type="match status" value="1"/>
</dbReference>
<dbReference type="Pfam" id="PF12838">
    <property type="entry name" value="Fer4_7"/>
    <property type="match status" value="1"/>
</dbReference>
<dbReference type="SUPFAM" id="SSF54862">
    <property type="entry name" value="4Fe-4S ferredoxins"/>
    <property type="match status" value="1"/>
</dbReference>
<dbReference type="PROSITE" id="PS00198">
    <property type="entry name" value="4FE4S_FER_1"/>
    <property type="match status" value="2"/>
</dbReference>
<dbReference type="PROSITE" id="PS51379">
    <property type="entry name" value="4FE4S_FER_2"/>
    <property type="match status" value="2"/>
</dbReference>
<evidence type="ECO:0000255" key="1">
    <source>
        <dbReference type="HAMAP-Rule" id="MF_01351"/>
    </source>
</evidence>
<protein>
    <recommendedName>
        <fullName evidence="1">NADH-quinone oxidoreductase subunit I</fullName>
        <ecNumber evidence="1">7.1.1.-</ecNumber>
    </recommendedName>
    <alternativeName>
        <fullName evidence="1">NADH dehydrogenase I subunit I</fullName>
    </alternativeName>
    <alternativeName>
        <fullName evidence="1">NDH-1 subunit I</fullName>
    </alternativeName>
</protein>
<keyword id="KW-0004">4Fe-4S</keyword>
<keyword id="KW-0997">Cell inner membrane</keyword>
<keyword id="KW-1003">Cell membrane</keyword>
<keyword id="KW-0408">Iron</keyword>
<keyword id="KW-0411">Iron-sulfur</keyword>
<keyword id="KW-0472">Membrane</keyword>
<keyword id="KW-0479">Metal-binding</keyword>
<keyword id="KW-0520">NAD</keyword>
<keyword id="KW-0874">Quinone</keyword>
<keyword id="KW-0677">Repeat</keyword>
<keyword id="KW-1278">Translocase</keyword>
<keyword id="KW-0830">Ubiquinone</keyword>
<comment type="function">
    <text evidence="1">NDH-1 shuttles electrons from NADH, via FMN and iron-sulfur (Fe-S) centers, to quinones in the respiratory chain. The immediate electron acceptor for the enzyme in this species is believed to be ubiquinone. Couples the redox reaction to proton translocation (for every two electrons transferred, four hydrogen ions are translocated across the cytoplasmic membrane), and thus conserves the redox energy in a proton gradient.</text>
</comment>
<comment type="catalytic activity">
    <reaction evidence="1">
        <text>a quinone + NADH + 5 H(+)(in) = a quinol + NAD(+) + 4 H(+)(out)</text>
        <dbReference type="Rhea" id="RHEA:57888"/>
        <dbReference type="ChEBI" id="CHEBI:15378"/>
        <dbReference type="ChEBI" id="CHEBI:24646"/>
        <dbReference type="ChEBI" id="CHEBI:57540"/>
        <dbReference type="ChEBI" id="CHEBI:57945"/>
        <dbReference type="ChEBI" id="CHEBI:132124"/>
    </reaction>
</comment>
<comment type="cofactor">
    <cofactor evidence="1">
        <name>[4Fe-4S] cluster</name>
        <dbReference type="ChEBI" id="CHEBI:49883"/>
    </cofactor>
    <text evidence="1">Binds 2 [4Fe-4S] clusters per subunit.</text>
</comment>
<comment type="subunit">
    <text evidence="1">NDH-1 is composed of 13 different subunits. Subunits NuoA, H, J, K, L, M, N constitute the membrane sector of the complex.</text>
</comment>
<comment type="subcellular location">
    <subcellularLocation>
        <location evidence="1">Cell inner membrane</location>
        <topology evidence="1">Peripheral membrane protein</topology>
    </subcellularLocation>
</comment>
<comment type="similarity">
    <text evidence="1">Belongs to the complex I 23 kDa subunit family.</text>
</comment>
<sequence length="180" mass="20559">MTLKELVVGFGTQVRSLWMIGLHAFHKRETLMYPEEPVYLPPRYRGRIVLTRDPDGEERCVACNLCAVACPVGCISLQKAEQKDGRWYPEFFRINFSRCIFCGLCEEACPTTAIQLTPDFEMGEFKRQDLVYEKEDLLISGPGKYPEYNFYRMAGMAIDGKQKGEAENEAKPIDVKGLMP</sequence>
<organism>
    <name type="scientific">Yersinia pseudotuberculosis serotype O:1b (strain IP 31758)</name>
    <dbReference type="NCBI Taxonomy" id="349747"/>
    <lineage>
        <taxon>Bacteria</taxon>
        <taxon>Pseudomonadati</taxon>
        <taxon>Pseudomonadota</taxon>
        <taxon>Gammaproteobacteria</taxon>
        <taxon>Enterobacterales</taxon>
        <taxon>Yersiniaceae</taxon>
        <taxon>Yersinia</taxon>
    </lineage>
</organism>